<reference key="1">
    <citation type="journal article" date="2006" name="J. Bacteriol.">
        <title>Complete genome sequence of Yersinia pestis strains Antiqua and Nepal516: evidence of gene reduction in an emerging pathogen.</title>
        <authorList>
            <person name="Chain P.S.G."/>
            <person name="Hu P."/>
            <person name="Malfatti S.A."/>
            <person name="Radnedge L."/>
            <person name="Larimer F."/>
            <person name="Vergez L.M."/>
            <person name="Worsham P."/>
            <person name="Chu M.C."/>
            <person name="Andersen G.L."/>
        </authorList>
    </citation>
    <scope>NUCLEOTIDE SEQUENCE [LARGE SCALE GENOMIC DNA]</scope>
    <source>
        <strain>Nepal516</strain>
    </source>
</reference>
<reference key="2">
    <citation type="submission" date="2009-04" db="EMBL/GenBank/DDBJ databases">
        <title>Yersinia pestis Nepal516A whole genome shotgun sequencing project.</title>
        <authorList>
            <person name="Plunkett G. III"/>
            <person name="Anderson B.D."/>
            <person name="Baumler D.J."/>
            <person name="Burland V."/>
            <person name="Cabot E.L."/>
            <person name="Glasner J.D."/>
            <person name="Mau B."/>
            <person name="Neeno-Eckwall E."/>
            <person name="Perna N.T."/>
            <person name="Munk A.C."/>
            <person name="Tapia R."/>
            <person name="Green L.D."/>
            <person name="Rogers Y.C."/>
            <person name="Detter J.C."/>
            <person name="Bruce D.C."/>
            <person name="Brettin T.S."/>
        </authorList>
    </citation>
    <scope>NUCLEOTIDE SEQUENCE [LARGE SCALE GENOMIC DNA]</scope>
    <source>
        <strain>Nepal516</strain>
    </source>
</reference>
<name>METE_YERPN</name>
<accession>Q1CNC1</accession>
<accession>D1Q169</accession>
<evidence type="ECO:0000255" key="1">
    <source>
        <dbReference type="HAMAP-Rule" id="MF_00172"/>
    </source>
</evidence>
<feature type="chain" id="PRO_1000017295" description="5-methyltetrahydropteroyltriglutamate--homocysteine methyltransferase">
    <location>
        <begin position="1"/>
        <end position="758"/>
    </location>
</feature>
<feature type="active site" description="Proton donor" evidence="1">
    <location>
        <position position="697"/>
    </location>
</feature>
<feature type="binding site" evidence="1">
    <location>
        <begin position="17"/>
        <end position="20"/>
    </location>
    <ligand>
        <name>5-methyltetrahydropteroyltri-L-glutamate</name>
        <dbReference type="ChEBI" id="CHEBI:58207"/>
    </ligand>
</feature>
<feature type="binding site" evidence="1">
    <location>
        <position position="117"/>
    </location>
    <ligand>
        <name>5-methyltetrahydropteroyltri-L-glutamate</name>
        <dbReference type="ChEBI" id="CHEBI:58207"/>
    </ligand>
</feature>
<feature type="binding site" evidence="1">
    <location>
        <begin position="434"/>
        <end position="436"/>
    </location>
    <ligand>
        <name>L-homocysteine</name>
        <dbReference type="ChEBI" id="CHEBI:58199"/>
    </ligand>
</feature>
<feature type="binding site" evidence="1">
    <location>
        <begin position="434"/>
        <end position="436"/>
    </location>
    <ligand>
        <name>L-methionine</name>
        <dbReference type="ChEBI" id="CHEBI:57844"/>
    </ligand>
</feature>
<feature type="binding site" evidence="1">
    <location>
        <position position="487"/>
    </location>
    <ligand>
        <name>L-homocysteine</name>
        <dbReference type="ChEBI" id="CHEBI:58199"/>
    </ligand>
</feature>
<feature type="binding site" evidence="1">
    <location>
        <position position="487"/>
    </location>
    <ligand>
        <name>L-methionine</name>
        <dbReference type="ChEBI" id="CHEBI:57844"/>
    </ligand>
</feature>
<feature type="binding site" evidence="1">
    <location>
        <begin position="518"/>
        <end position="519"/>
    </location>
    <ligand>
        <name>5-methyltetrahydropteroyltri-L-glutamate</name>
        <dbReference type="ChEBI" id="CHEBI:58207"/>
    </ligand>
</feature>
<feature type="binding site" evidence="1">
    <location>
        <position position="564"/>
    </location>
    <ligand>
        <name>5-methyltetrahydropteroyltri-L-glutamate</name>
        <dbReference type="ChEBI" id="CHEBI:58207"/>
    </ligand>
</feature>
<feature type="binding site" evidence="1">
    <location>
        <position position="602"/>
    </location>
    <ligand>
        <name>L-homocysteine</name>
        <dbReference type="ChEBI" id="CHEBI:58199"/>
    </ligand>
</feature>
<feature type="binding site" evidence="1">
    <location>
        <position position="602"/>
    </location>
    <ligand>
        <name>L-methionine</name>
        <dbReference type="ChEBI" id="CHEBI:57844"/>
    </ligand>
</feature>
<feature type="binding site" evidence="1">
    <location>
        <position position="608"/>
    </location>
    <ligand>
        <name>5-methyltetrahydropteroyltri-L-glutamate</name>
        <dbReference type="ChEBI" id="CHEBI:58207"/>
    </ligand>
</feature>
<feature type="binding site" evidence="1">
    <location>
        <position position="644"/>
    </location>
    <ligand>
        <name>Zn(2+)</name>
        <dbReference type="ChEBI" id="CHEBI:29105"/>
        <note>catalytic</note>
    </ligand>
</feature>
<feature type="binding site" evidence="1">
    <location>
        <position position="646"/>
    </location>
    <ligand>
        <name>Zn(2+)</name>
        <dbReference type="ChEBI" id="CHEBI:29105"/>
        <note>catalytic</note>
    </ligand>
</feature>
<feature type="binding site" evidence="1">
    <location>
        <position position="668"/>
    </location>
    <ligand>
        <name>Zn(2+)</name>
        <dbReference type="ChEBI" id="CHEBI:29105"/>
        <note>catalytic</note>
    </ligand>
</feature>
<feature type="binding site" evidence="1">
    <location>
        <position position="729"/>
    </location>
    <ligand>
        <name>Zn(2+)</name>
        <dbReference type="ChEBI" id="CHEBI:29105"/>
        <note>catalytic</note>
    </ligand>
</feature>
<organism>
    <name type="scientific">Yersinia pestis bv. Antiqua (strain Nepal516)</name>
    <dbReference type="NCBI Taxonomy" id="377628"/>
    <lineage>
        <taxon>Bacteria</taxon>
        <taxon>Pseudomonadati</taxon>
        <taxon>Pseudomonadota</taxon>
        <taxon>Gammaproteobacteria</taxon>
        <taxon>Enterobacterales</taxon>
        <taxon>Yersiniaceae</taxon>
        <taxon>Yersinia</taxon>
    </lineage>
</organism>
<dbReference type="EC" id="2.1.1.14" evidence="1"/>
<dbReference type="EMBL" id="CP000305">
    <property type="protein sequence ID" value="ABG16509.1"/>
    <property type="molecule type" value="Genomic_DNA"/>
</dbReference>
<dbReference type="EMBL" id="ACNQ01000001">
    <property type="protein sequence ID" value="EEO78623.1"/>
    <property type="molecule type" value="Genomic_DNA"/>
</dbReference>
<dbReference type="RefSeq" id="WP_002211526.1">
    <property type="nucleotide sequence ID" value="NZ_ACNQ01000001.1"/>
</dbReference>
<dbReference type="SMR" id="Q1CNC1"/>
<dbReference type="GeneID" id="57974920"/>
<dbReference type="KEGG" id="ypn:YPN_0176"/>
<dbReference type="HOGENOM" id="CLU_013175_0_0_6"/>
<dbReference type="UniPathway" id="UPA00051">
    <property type="reaction ID" value="UER00082"/>
</dbReference>
<dbReference type="Proteomes" id="UP000008936">
    <property type="component" value="Chromosome"/>
</dbReference>
<dbReference type="GO" id="GO:0003871">
    <property type="term" value="F:5-methyltetrahydropteroyltriglutamate-homocysteine S-methyltransferase activity"/>
    <property type="evidence" value="ECO:0007669"/>
    <property type="project" value="UniProtKB-UniRule"/>
</dbReference>
<dbReference type="GO" id="GO:0008270">
    <property type="term" value="F:zinc ion binding"/>
    <property type="evidence" value="ECO:0007669"/>
    <property type="project" value="InterPro"/>
</dbReference>
<dbReference type="GO" id="GO:0009086">
    <property type="term" value="P:methionine biosynthetic process"/>
    <property type="evidence" value="ECO:0007669"/>
    <property type="project" value="UniProtKB-UniRule"/>
</dbReference>
<dbReference type="GO" id="GO:0032259">
    <property type="term" value="P:methylation"/>
    <property type="evidence" value="ECO:0007669"/>
    <property type="project" value="UniProtKB-KW"/>
</dbReference>
<dbReference type="CDD" id="cd03311">
    <property type="entry name" value="CIMS_C_terminal_like"/>
    <property type="match status" value="1"/>
</dbReference>
<dbReference type="CDD" id="cd03312">
    <property type="entry name" value="CIMS_N_terminal_like"/>
    <property type="match status" value="1"/>
</dbReference>
<dbReference type="FunFam" id="3.20.20.210:FF:000002">
    <property type="entry name" value="5-methyltetrahydropteroyltriglutamate--homocysteine methyltransferase"/>
    <property type="match status" value="1"/>
</dbReference>
<dbReference type="FunFam" id="3.20.20.210:FF:000003">
    <property type="entry name" value="5-methyltetrahydropteroyltriglutamate--homocysteine methyltransferase"/>
    <property type="match status" value="1"/>
</dbReference>
<dbReference type="Gene3D" id="3.20.20.210">
    <property type="match status" value="2"/>
</dbReference>
<dbReference type="HAMAP" id="MF_00172">
    <property type="entry name" value="Meth_synth"/>
    <property type="match status" value="1"/>
</dbReference>
<dbReference type="InterPro" id="IPR013215">
    <property type="entry name" value="Cbl-indep_Met_Synth_N"/>
</dbReference>
<dbReference type="InterPro" id="IPR006276">
    <property type="entry name" value="Cobalamin-indep_Met_synthase"/>
</dbReference>
<dbReference type="InterPro" id="IPR002629">
    <property type="entry name" value="Met_Synth_C/arc"/>
</dbReference>
<dbReference type="InterPro" id="IPR038071">
    <property type="entry name" value="UROD/MetE-like_sf"/>
</dbReference>
<dbReference type="NCBIfam" id="TIGR01371">
    <property type="entry name" value="met_syn_B12ind"/>
    <property type="match status" value="1"/>
</dbReference>
<dbReference type="NCBIfam" id="NF003556">
    <property type="entry name" value="PRK05222.1"/>
    <property type="match status" value="1"/>
</dbReference>
<dbReference type="PANTHER" id="PTHR30519">
    <property type="entry name" value="5-METHYLTETRAHYDROPTEROYLTRIGLUTAMATE--HOMOCYSTEINE METHYLTRANSFERASE"/>
    <property type="match status" value="1"/>
</dbReference>
<dbReference type="Pfam" id="PF08267">
    <property type="entry name" value="Meth_synt_1"/>
    <property type="match status" value="1"/>
</dbReference>
<dbReference type="Pfam" id="PF01717">
    <property type="entry name" value="Meth_synt_2"/>
    <property type="match status" value="1"/>
</dbReference>
<dbReference type="PIRSF" id="PIRSF000382">
    <property type="entry name" value="MeTrfase_B12_ind"/>
    <property type="match status" value="1"/>
</dbReference>
<dbReference type="SUPFAM" id="SSF51726">
    <property type="entry name" value="UROD/MetE-like"/>
    <property type="match status" value="2"/>
</dbReference>
<protein>
    <recommendedName>
        <fullName evidence="1">5-methyltetrahydropteroyltriglutamate--homocysteine methyltransferase</fullName>
        <ecNumber evidence="1">2.1.1.14</ecNumber>
    </recommendedName>
    <alternativeName>
        <fullName evidence="1">Cobalamin-independent methionine synthase</fullName>
    </alternativeName>
    <alternativeName>
        <fullName evidence="1">Methionine synthase, vitamin-B12 independent isozyme</fullName>
    </alternativeName>
</protein>
<gene>
    <name evidence="1" type="primary">metE</name>
    <name type="ordered locus">YPN_0176</name>
    <name type="ORF">YP516_0142</name>
</gene>
<proteinExistence type="inferred from homology"/>
<keyword id="KW-0028">Amino-acid biosynthesis</keyword>
<keyword id="KW-0479">Metal-binding</keyword>
<keyword id="KW-0486">Methionine biosynthesis</keyword>
<keyword id="KW-0489">Methyltransferase</keyword>
<keyword id="KW-0677">Repeat</keyword>
<keyword id="KW-0808">Transferase</keyword>
<keyword id="KW-0862">Zinc</keyword>
<comment type="function">
    <text evidence="1">Catalyzes the transfer of a methyl group from 5-methyltetrahydrofolate to homocysteine resulting in methionine formation.</text>
</comment>
<comment type="catalytic activity">
    <reaction evidence="1">
        <text>5-methyltetrahydropteroyltri-L-glutamate + L-homocysteine = tetrahydropteroyltri-L-glutamate + L-methionine</text>
        <dbReference type="Rhea" id="RHEA:21196"/>
        <dbReference type="ChEBI" id="CHEBI:57844"/>
        <dbReference type="ChEBI" id="CHEBI:58140"/>
        <dbReference type="ChEBI" id="CHEBI:58199"/>
        <dbReference type="ChEBI" id="CHEBI:58207"/>
        <dbReference type="EC" id="2.1.1.14"/>
    </reaction>
</comment>
<comment type="cofactor">
    <cofactor evidence="1">
        <name>Zn(2+)</name>
        <dbReference type="ChEBI" id="CHEBI:29105"/>
    </cofactor>
    <text evidence="1">Binds 1 zinc ion per subunit.</text>
</comment>
<comment type="pathway">
    <text evidence="1">Amino-acid biosynthesis; L-methionine biosynthesis via de novo pathway; L-methionine from L-homocysteine (MetE route): step 1/1.</text>
</comment>
<comment type="similarity">
    <text evidence="1">Belongs to the vitamin-B12 independent methionine synthase family.</text>
</comment>
<sequence length="758" mass="85677">MTILNHTLGFPRVGLKRELKKAQESYWAGNSTQEELLNVGRELRARHWQQQQQAGVDLVPVGDFAWYDHVLTTSLLLGNVPERHQNADGSIDIDTLFRIGRGRAPTGKPAAAAEMTKWFNTNYHYMVPEFQQGQQFKLGWTQLLDEVDEALALGHKIKPVLLGPITYLWLGKVKGEQFDRLSLLNDILPVYQQVLAELAKRGIEWVQIDEPALVLELPQEWLDAYQPAYQALQGQVKLLLTTYFDSIGHNIDTIRALPVQGLHVDVVTGHDDLAVLNKNLPKEWLLSLGVINGRNVWRADLSSWFERLQPLVNSRPLWLGSSCSLLHSPIDLNEETRLDAEVKSWFAFALQKCAELALLTQALNAPNDAKLAELAAYSAPIRARRSSSRVHNAQVEQRLAAITSQDIERQLPYEARAETQRKRFNLPAWPTTTIGSFPQTTEIRGLRLDFKQGRLDGKNYRTGISEHIKHAIAEQERLGLDVLVHGEAERNDMVEYFGEHLDGFVFTQNGWVQSYGSRCVKPPVIIGDISRPEAITVEWAKYAQSLTEKPVKGMLTGPVTILCWSFPREDVSRETIAKQIALALRDEVEDLEKAGIGIIQIDEPALREGLPLRRADWQAYLQWAVDAFKLNAAVAQNDTQIHTHMCYCEFNDIMDSIAALDADVITIETSRSDMELLESFEDFAYPNEIGPGVYDIHSPNVPSVEWIEALLRKAAQRIPAERLWVNPDCGLKTRGWPETRQALANMVLAAQRLREEQV</sequence>